<gene>
    <name type="primary">PHF6</name>
</gene>
<comment type="function">
    <text evidence="1">Transcriptional regulator that associates with ribosomal RNA promoters and suppresses ribosomal RNA (rRNA) transcription.</text>
</comment>
<comment type="subunit">
    <text evidence="1">Interacts with UBTF. Interacts with the NuRD complex component RBBP4 (via the nucleolar localization motif), the interaction mediates transcriptional repression activity (By similarity).</text>
</comment>
<comment type="subcellular location">
    <subcellularLocation>
        <location evidence="1">Nucleus</location>
    </subcellularLocation>
    <subcellularLocation>
        <location evidence="1">Nucleus</location>
        <location evidence="1">Nucleolus</location>
    </subcellularLocation>
    <subcellularLocation>
        <location evidence="2">Chromosome</location>
        <location evidence="2">Centromere</location>
        <location evidence="2">Kinetochore</location>
    </subcellularLocation>
    <text evidence="1">Nuclear, it particularly localizes to the nucleolus.</text>
</comment>
<comment type="domain">
    <text evidence="1">The PHD-type zinc finger 1 mediates both nucleolar localization and interaction with UBTF.</text>
</comment>
<comment type="domain">
    <text evidence="2">The ePHD2 domain folds as an integrated structural module comprizing the C2HC pre-PHD-type 2 zinc finger and the PHD-type 2 zinc finger. It mediates non-specific binding to dsDNA, but doesn't bind histones in contrast to many PHD-type zinc fingers.</text>
</comment>
<reference key="1">
    <citation type="submission" date="2006-09" db="EMBL/GenBank/DDBJ databases">
        <authorList>
            <consortium name="NIH - Mammalian Gene Collection (MGC) project"/>
        </authorList>
    </citation>
    <scope>NUCLEOTIDE SEQUENCE [LARGE SCALE MRNA]</scope>
    <source>
        <strain>Hereford</strain>
        <tissue>Placenta</tissue>
    </source>
</reference>
<sequence>MSSSVEQKKGPTRQRKCGFCKSNRDKECGQLLISENQKVAAHHKCMLFSSALVSSHSDNESLGGFSIEDVQKEIKRGTKLMCSLCHCPGATIGCDVKTCHRTYHYHCALHDKAQIREKPSQGIYMVYCRKHKKTAHNSEADLEESFNEHELEPSSPKSKKKSRKGRPRKTNFKGLSEDTRSTSSHGTDEMESSSYRDRSPHRSSPSDTRPKCGFCHVGEEENQARGKLHIFNAKKAAAHYKCMLFSSGTVQLTTTSRAEFGDFDIKTVLQEIKRGKRMKCTLCSQPGATIGCEIKACVKTYHYHCGVQDKAKYIENMSRGIYKLYCKNHSGNDERDEEDEERESKSRGKVEIDQQQLTQQQLNGN</sequence>
<evidence type="ECO:0000250" key="1"/>
<evidence type="ECO:0000250" key="2">
    <source>
        <dbReference type="UniProtKB" id="Q8IWS0"/>
    </source>
</evidence>
<evidence type="ECO:0000250" key="3">
    <source>
        <dbReference type="UniProtKB" id="Q9D4J7"/>
    </source>
</evidence>
<evidence type="ECO:0000255" key="4"/>
<evidence type="ECO:0000255" key="5">
    <source>
        <dbReference type="PROSITE-ProRule" id="PRU01146"/>
    </source>
</evidence>
<evidence type="ECO:0000256" key="6">
    <source>
        <dbReference type="SAM" id="MobiDB-lite"/>
    </source>
</evidence>
<name>PHF6_BOVIN</name>
<protein>
    <recommendedName>
        <fullName>PHD finger protein 6</fullName>
    </recommendedName>
</protein>
<keyword id="KW-0007">Acetylation</keyword>
<keyword id="KW-0137">Centromere</keyword>
<keyword id="KW-0158">Chromosome</keyword>
<keyword id="KW-0238">DNA-binding</keyword>
<keyword id="KW-1017">Isopeptide bond</keyword>
<keyword id="KW-0995">Kinetochore</keyword>
<keyword id="KW-0479">Metal-binding</keyword>
<keyword id="KW-0539">Nucleus</keyword>
<keyword id="KW-0597">Phosphoprotein</keyword>
<keyword id="KW-1185">Reference proteome</keyword>
<keyword id="KW-0677">Repeat</keyword>
<keyword id="KW-0804">Transcription</keyword>
<keyword id="KW-0805">Transcription regulation</keyword>
<keyword id="KW-0832">Ubl conjugation</keyword>
<keyword id="KW-0862">Zinc</keyword>
<keyword id="KW-0863">Zinc-finger</keyword>
<proteinExistence type="evidence at transcript level"/>
<feature type="initiator methionine" description="Removed" evidence="2">
    <location>
        <position position="1"/>
    </location>
</feature>
<feature type="chain" id="PRO_0000288798" description="PHD finger protein 6">
    <location>
        <begin position="2"/>
        <end position="365"/>
    </location>
</feature>
<feature type="zinc finger region" description="C2HC pre-PHD-type 1" evidence="5">
    <location>
        <begin position="14"/>
        <end position="52"/>
    </location>
</feature>
<feature type="zinc finger region" description="PHD-type 1" evidence="5">
    <location>
        <begin position="80"/>
        <end position="132"/>
    </location>
</feature>
<feature type="zinc finger region" description="C2HC pre-PHD-type 2" evidence="5">
    <location>
        <begin position="209"/>
        <end position="249"/>
    </location>
</feature>
<feature type="zinc finger region" description="PHD-type 2" evidence="5">
    <location>
        <begin position="278"/>
        <end position="330"/>
    </location>
</feature>
<feature type="region of interest" description="Extended PHD1 domain (ePHD1)" evidence="5">
    <location>
        <begin position="14"/>
        <end position="132"/>
    </location>
</feature>
<feature type="region of interest" description="Disordered" evidence="6">
    <location>
        <begin position="139"/>
        <end position="211"/>
    </location>
</feature>
<feature type="region of interest" description="Extended PHD2 domain (ePHD2)" evidence="5">
    <location>
        <begin position="209"/>
        <end position="330"/>
    </location>
</feature>
<feature type="region of interest" description="Disordered" evidence="6">
    <location>
        <begin position="330"/>
        <end position="365"/>
    </location>
</feature>
<feature type="short sequence motif" description="Nuclear localization signal" evidence="4">
    <location>
        <begin position="13"/>
        <end position="16"/>
    </location>
</feature>
<feature type="short sequence motif" description="Nuclear localization signal" evidence="4">
    <location>
        <begin position="129"/>
        <end position="133"/>
    </location>
</feature>
<feature type="short sequence motif" description="Nucleolar localization signal" evidence="4">
    <location>
        <begin position="157"/>
        <end position="169"/>
    </location>
</feature>
<feature type="compositionally biased region" description="Basic residues" evidence="6">
    <location>
        <begin position="157"/>
        <end position="171"/>
    </location>
</feature>
<feature type="compositionally biased region" description="Basic and acidic residues" evidence="6">
    <location>
        <begin position="342"/>
        <end position="352"/>
    </location>
</feature>
<feature type="compositionally biased region" description="Low complexity" evidence="6">
    <location>
        <begin position="354"/>
        <end position="365"/>
    </location>
</feature>
<feature type="modified residue" description="N-acetylserine" evidence="2">
    <location>
        <position position="2"/>
    </location>
</feature>
<feature type="modified residue" description="Phosphoserine" evidence="2">
    <location>
        <position position="138"/>
    </location>
</feature>
<feature type="modified residue" description="Phosphoserine" evidence="2">
    <location>
        <position position="145"/>
    </location>
</feature>
<feature type="modified residue" description="Phosphoserine" evidence="2">
    <location>
        <position position="155"/>
    </location>
</feature>
<feature type="modified residue" description="Phosphoserine" evidence="3">
    <location>
        <position position="183"/>
    </location>
</feature>
<feature type="modified residue" description="Phosphoserine" evidence="2">
    <location>
        <position position="199"/>
    </location>
</feature>
<feature type="modified residue" description="Phosphothreonine" evidence="2">
    <location>
        <position position="358"/>
    </location>
</feature>
<feature type="cross-link" description="Glycyl lysine isopeptide (Lys-Gly) (interchain with G-Cter in SUMO2)" evidence="2">
    <location>
        <position position="173"/>
    </location>
</feature>
<feature type="cross-link" description="Glycyl lysine isopeptide (Lys-Gly) (interchain with G-Cter in SUMO2)" evidence="2">
    <location>
        <position position="227"/>
    </location>
</feature>
<dbReference type="EMBL" id="BC123609">
    <property type="protein sequence ID" value="AAI23610.1"/>
    <property type="molecule type" value="mRNA"/>
</dbReference>
<dbReference type="RefSeq" id="NP_001069237.1">
    <property type="nucleotide sequence ID" value="NM_001075769.1"/>
</dbReference>
<dbReference type="RefSeq" id="XP_010819737.1">
    <property type="nucleotide sequence ID" value="XM_010821435.1"/>
</dbReference>
<dbReference type="RefSeq" id="XP_015325676.1">
    <property type="nucleotide sequence ID" value="XM_015470190.1"/>
</dbReference>
<dbReference type="RefSeq" id="XP_059739395.1">
    <property type="nucleotide sequence ID" value="XM_059883412.1"/>
</dbReference>
<dbReference type="SMR" id="Q08DR0"/>
<dbReference type="FunCoup" id="Q08DR0">
    <property type="interactions" value="2102"/>
</dbReference>
<dbReference type="STRING" id="9913.ENSBTAP00000020218"/>
<dbReference type="GeneID" id="518186"/>
<dbReference type="KEGG" id="bta:518186"/>
<dbReference type="CTD" id="84295"/>
<dbReference type="VEuPathDB" id="HostDB:ENSBTAG00000015196"/>
<dbReference type="InParanoid" id="Q08DR0"/>
<dbReference type="OMA" id="KHKKTPH"/>
<dbReference type="OrthoDB" id="2384350at2759"/>
<dbReference type="Proteomes" id="UP000009136">
    <property type="component" value="Chromosome X"/>
</dbReference>
<dbReference type="Bgee" id="ENSBTAG00000015196">
    <property type="expression patterns" value="Expressed in nasopharynx and 112 other cell types or tissues"/>
</dbReference>
<dbReference type="GO" id="GO:0000776">
    <property type="term" value="C:kinetochore"/>
    <property type="evidence" value="ECO:0007669"/>
    <property type="project" value="UniProtKB-KW"/>
</dbReference>
<dbReference type="GO" id="GO:0005730">
    <property type="term" value="C:nucleolus"/>
    <property type="evidence" value="ECO:0007669"/>
    <property type="project" value="UniProtKB-SubCell"/>
</dbReference>
<dbReference type="GO" id="GO:0005634">
    <property type="term" value="C:nucleus"/>
    <property type="evidence" value="ECO:0000318"/>
    <property type="project" value="GO_Central"/>
</dbReference>
<dbReference type="GO" id="GO:0003677">
    <property type="term" value="F:DNA binding"/>
    <property type="evidence" value="ECO:0007669"/>
    <property type="project" value="UniProtKB-KW"/>
</dbReference>
<dbReference type="GO" id="GO:0042393">
    <property type="term" value="F:histone binding"/>
    <property type="evidence" value="ECO:0000318"/>
    <property type="project" value="GO_Central"/>
</dbReference>
<dbReference type="GO" id="GO:0042826">
    <property type="term" value="F:histone deacetylase binding"/>
    <property type="evidence" value="ECO:0000318"/>
    <property type="project" value="GO_Central"/>
</dbReference>
<dbReference type="GO" id="GO:0008270">
    <property type="term" value="F:zinc ion binding"/>
    <property type="evidence" value="ECO:0007669"/>
    <property type="project" value="UniProtKB-KW"/>
</dbReference>
<dbReference type="CDD" id="cd15710">
    <property type="entry name" value="ePHD1_PHF6"/>
    <property type="match status" value="1"/>
</dbReference>
<dbReference type="CDD" id="cd15711">
    <property type="entry name" value="ePHD2_PHF6"/>
    <property type="match status" value="1"/>
</dbReference>
<dbReference type="FunFam" id="3.30.40.10:FF:000219">
    <property type="entry name" value="PHD finger protein 6 isoform X1"/>
    <property type="match status" value="1"/>
</dbReference>
<dbReference type="FunFam" id="3.30.40.10:FF:000167">
    <property type="entry name" value="PHD finger protein 6 X-linked"/>
    <property type="match status" value="1"/>
</dbReference>
<dbReference type="Gene3D" id="3.30.40.10">
    <property type="entry name" value="Zinc/RING finger domain, C3HC4 (zinc finger)"/>
    <property type="match status" value="2"/>
</dbReference>
<dbReference type="InterPro" id="IPR034732">
    <property type="entry name" value="EPHD"/>
</dbReference>
<dbReference type="InterPro" id="IPR051188">
    <property type="entry name" value="PHD-type_Zinc_Finger"/>
</dbReference>
<dbReference type="InterPro" id="IPR001965">
    <property type="entry name" value="Znf_PHD"/>
</dbReference>
<dbReference type="InterPro" id="IPR013083">
    <property type="entry name" value="Znf_RING/FYVE/PHD"/>
</dbReference>
<dbReference type="PANTHER" id="PTHR12420">
    <property type="entry name" value="PHD FINGER PROTEIN"/>
    <property type="match status" value="1"/>
</dbReference>
<dbReference type="PANTHER" id="PTHR12420:SF15">
    <property type="entry name" value="PHD FINGER PROTEIN 6"/>
    <property type="match status" value="1"/>
</dbReference>
<dbReference type="Pfam" id="PF13771">
    <property type="entry name" value="zf-HC5HC2H"/>
    <property type="match status" value="2"/>
</dbReference>
<dbReference type="SMART" id="SM00249">
    <property type="entry name" value="PHD"/>
    <property type="match status" value="2"/>
</dbReference>
<dbReference type="PROSITE" id="PS51805">
    <property type="entry name" value="EPHD"/>
    <property type="match status" value="2"/>
</dbReference>
<organism>
    <name type="scientific">Bos taurus</name>
    <name type="common">Bovine</name>
    <dbReference type="NCBI Taxonomy" id="9913"/>
    <lineage>
        <taxon>Eukaryota</taxon>
        <taxon>Metazoa</taxon>
        <taxon>Chordata</taxon>
        <taxon>Craniata</taxon>
        <taxon>Vertebrata</taxon>
        <taxon>Euteleostomi</taxon>
        <taxon>Mammalia</taxon>
        <taxon>Eutheria</taxon>
        <taxon>Laurasiatheria</taxon>
        <taxon>Artiodactyla</taxon>
        <taxon>Ruminantia</taxon>
        <taxon>Pecora</taxon>
        <taxon>Bovidae</taxon>
        <taxon>Bovinae</taxon>
        <taxon>Bos</taxon>
    </lineage>
</organism>
<accession>Q08DR0</accession>